<organism>
    <name type="scientific">Pyrobaculum aerophilum (strain ATCC 51768 / DSM 7523 / JCM 9630 / CIP 104966 / NBRC 100827 / IM2)</name>
    <dbReference type="NCBI Taxonomy" id="178306"/>
    <lineage>
        <taxon>Archaea</taxon>
        <taxon>Thermoproteota</taxon>
        <taxon>Thermoprotei</taxon>
        <taxon>Thermoproteales</taxon>
        <taxon>Thermoproteaceae</taxon>
        <taxon>Pyrobaculum</taxon>
    </lineage>
</organism>
<accession>Q8ZWT4</accession>
<evidence type="ECO:0000255" key="1">
    <source>
        <dbReference type="HAMAP-Rule" id="MF_01111"/>
    </source>
</evidence>
<name>Y1629_PYRAE</name>
<feature type="chain" id="PRO_0000094530" description="UPF0200 protein PAE1629">
    <location>
        <begin position="1"/>
        <end position="174"/>
    </location>
</feature>
<feature type="binding site" evidence="1">
    <location>
        <begin position="9"/>
        <end position="16"/>
    </location>
    <ligand>
        <name>ATP</name>
        <dbReference type="ChEBI" id="CHEBI:30616"/>
    </ligand>
</feature>
<protein>
    <recommendedName>
        <fullName evidence="1">UPF0200 protein PAE1629</fullName>
    </recommendedName>
</protein>
<reference key="1">
    <citation type="journal article" date="2002" name="Proc. Natl. Acad. Sci. U.S.A.">
        <title>Genome sequence of the hyperthermophilic crenarchaeon Pyrobaculum aerophilum.</title>
        <authorList>
            <person name="Fitz-Gibbon S.T."/>
            <person name="Ladner H."/>
            <person name="Kim U.-J."/>
            <person name="Stetter K.O."/>
            <person name="Simon M.I."/>
            <person name="Miller J.H."/>
        </authorList>
    </citation>
    <scope>NUCLEOTIDE SEQUENCE [LARGE SCALE GENOMIC DNA]</scope>
    <source>
        <strain>ATCC 51768 / DSM 7523 / JCM 9630 / CIP 104966 / NBRC 100827 / IM2</strain>
    </source>
</reference>
<dbReference type="EMBL" id="AE009441">
    <property type="protein sequence ID" value="AAL63615.1"/>
    <property type="molecule type" value="Genomic_DNA"/>
</dbReference>
<dbReference type="RefSeq" id="WP_011008088.1">
    <property type="nucleotide sequence ID" value="NC_003364.1"/>
</dbReference>
<dbReference type="SMR" id="Q8ZWT4"/>
<dbReference type="FunCoup" id="Q8ZWT4">
    <property type="interactions" value="11"/>
</dbReference>
<dbReference type="STRING" id="178306.PAE1629"/>
<dbReference type="EnsemblBacteria" id="AAL63615">
    <property type="protein sequence ID" value="AAL63615"/>
    <property type="gene ID" value="PAE1629"/>
</dbReference>
<dbReference type="GeneID" id="1465864"/>
<dbReference type="KEGG" id="pai:PAE1629"/>
<dbReference type="PATRIC" id="fig|178306.9.peg.1204"/>
<dbReference type="eggNOG" id="arCOG01045">
    <property type="taxonomic scope" value="Archaea"/>
</dbReference>
<dbReference type="HOGENOM" id="CLU_096329_1_0_2"/>
<dbReference type="InParanoid" id="Q8ZWT4"/>
<dbReference type="Proteomes" id="UP000002439">
    <property type="component" value="Chromosome"/>
</dbReference>
<dbReference type="GO" id="GO:0005524">
    <property type="term" value="F:ATP binding"/>
    <property type="evidence" value="ECO:0007669"/>
    <property type="project" value="UniProtKB-UniRule"/>
</dbReference>
<dbReference type="Gene3D" id="3.40.50.300">
    <property type="entry name" value="P-loop containing nucleotide triphosphate hydrolases"/>
    <property type="match status" value="1"/>
</dbReference>
<dbReference type="HAMAP" id="MF_01111">
    <property type="entry name" value="UPF0200"/>
    <property type="match status" value="1"/>
</dbReference>
<dbReference type="InterPro" id="IPR022970">
    <property type="entry name" value="NTP_hydrolase-rel"/>
</dbReference>
<dbReference type="InterPro" id="IPR027417">
    <property type="entry name" value="P-loop_NTPase"/>
</dbReference>
<dbReference type="PANTHER" id="PTHR41930:SF1">
    <property type="entry name" value="DEPHOSPHO-COA KINASE"/>
    <property type="match status" value="1"/>
</dbReference>
<dbReference type="PANTHER" id="PTHR41930">
    <property type="entry name" value="UPF0200 PROTEIN MJ1399"/>
    <property type="match status" value="1"/>
</dbReference>
<dbReference type="Pfam" id="PF13207">
    <property type="entry name" value="AAA_17"/>
    <property type="match status" value="1"/>
</dbReference>
<dbReference type="SUPFAM" id="SSF52540">
    <property type="entry name" value="P-loop containing nucleoside triphosphate hydrolases"/>
    <property type="match status" value="1"/>
</dbReference>
<sequence>MINVLAVAGLPGSGKTTVARIIERRGYLYYSLGDVVRAEAERRGLTPDKTAVTMRLERGRKAVIYELLKSVKPGEKVVIDGIRSIEEVEALEEFLGTVFLIYVVASRKVRYQRLTGRGRSDDPLSFSQFLLRDLRELRFGLADLLSRADYIIVNETKSIEELEQEIGKVLLELR</sequence>
<proteinExistence type="inferred from homology"/>
<keyword id="KW-0067">ATP-binding</keyword>
<keyword id="KW-0547">Nucleotide-binding</keyword>
<keyword id="KW-1185">Reference proteome</keyword>
<comment type="similarity">
    <text evidence="1">Belongs to the UPF0200 family.</text>
</comment>
<gene>
    <name type="ordered locus">PAE1629</name>
</gene>